<feature type="signal peptide" evidence="5">
    <location>
        <begin position="1"/>
        <end position="21"/>
    </location>
</feature>
<feature type="chain" id="PRO_0000023266" description="NPC1-like intracellular cholesterol transporter 1">
    <location>
        <begin position="22"/>
        <end position="1359"/>
    </location>
</feature>
<feature type="topological domain" description="Extracellular" evidence="23">
    <location>
        <begin position="22"/>
        <end position="284"/>
    </location>
</feature>
<feature type="transmembrane region" description="Helical; Name=1" evidence="5">
    <location>
        <begin position="285"/>
        <end position="305"/>
    </location>
</feature>
<feature type="topological domain" description="Cytoplasmic" evidence="23">
    <location>
        <begin position="306"/>
        <end position="351"/>
    </location>
</feature>
<feature type="transmembrane region" description="Helical; Name=2" evidence="5">
    <location>
        <begin position="352"/>
        <end position="372"/>
    </location>
</feature>
<feature type="topological domain" description="Extracellular" evidence="23">
    <location>
        <begin position="373"/>
        <end position="632"/>
    </location>
</feature>
<feature type="transmembrane region" description="Helical; Name=3" evidence="5">
    <location>
        <begin position="633"/>
        <end position="653"/>
    </location>
</feature>
<feature type="topological domain" description="Cytoplasmic" evidence="23">
    <location>
        <begin position="654"/>
        <end position="666"/>
    </location>
</feature>
<feature type="transmembrane region" description="Helical; Name=4" evidence="5">
    <location>
        <begin position="667"/>
        <end position="687"/>
    </location>
</feature>
<feature type="topological domain" description="Extracellular" evidence="23">
    <location>
        <begin position="688"/>
        <end position="696"/>
    </location>
</feature>
<feature type="transmembrane region" description="Helical; Name=5" evidence="5">
    <location>
        <begin position="697"/>
        <end position="717"/>
    </location>
</feature>
<feature type="topological domain" description="Cytoplasmic" evidence="23">
    <location>
        <begin position="718"/>
        <end position="742"/>
    </location>
</feature>
<feature type="transmembrane region" description="Helical; Name=6" evidence="5">
    <location>
        <begin position="743"/>
        <end position="763"/>
    </location>
</feature>
<feature type="topological domain" description="Extracellular" evidence="23">
    <location>
        <begin position="764"/>
        <end position="776"/>
    </location>
</feature>
<feature type="transmembrane region" description="Helical; Name=7" evidence="5">
    <location>
        <begin position="777"/>
        <end position="797"/>
    </location>
</feature>
<feature type="topological domain" description="Cytoplasmic" evidence="23">
    <location>
        <begin position="798"/>
        <end position="846"/>
    </location>
</feature>
<feature type="transmembrane region" description="Helical; Name=8" evidence="5">
    <location>
        <begin position="847"/>
        <end position="867"/>
    </location>
</feature>
<feature type="topological domain" description="Extracellular" evidence="23">
    <location>
        <begin position="868"/>
        <end position="1139"/>
    </location>
</feature>
<feature type="transmembrane region" description="Helical; Name=9" evidence="5">
    <location>
        <begin position="1140"/>
        <end position="1160"/>
    </location>
</feature>
<feature type="topological domain" description="Cytoplasmic" evidence="23">
    <location>
        <begin position="1161"/>
        <end position="1168"/>
    </location>
</feature>
<feature type="transmembrane region" description="Helical; Name=10" evidence="5">
    <location>
        <begin position="1169"/>
        <end position="1189"/>
    </location>
</feature>
<feature type="topological domain" description="Extracellular" evidence="23">
    <location>
        <begin position="1190"/>
        <end position="1191"/>
    </location>
</feature>
<feature type="transmembrane region" description="Helical; Name=11" evidence="5">
    <location>
        <begin position="1192"/>
        <end position="1212"/>
    </location>
</feature>
<feature type="topological domain" description="Cytoplasmic" evidence="23">
    <location>
        <begin position="1213"/>
        <end position="1236"/>
    </location>
</feature>
<feature type="transmembrane region" description="Helical; Name=12" evidence="5">
    <location>
        <begin position="1237"/>
        <end position="1257"/>
    </location>
</feature>
<feature type="topological domain" description="Extracellular" evidence="23">
    <location>
        <begin position="1258"/>
        <end position="1268"/>
    </location>
</feature>
<feature type="transmembrane region" description="Helical; Name=13" evidence="5">
    <location>
        <begin position="1269"/>
        <end position="1289"/>
    </location>
</feature>
<feature type="topological domain" description="Cytoplasmic" evidence="23">
    <location>
        <begin position="1290"/>
        <end position="1359"/>
    </location>
</feature>
<feature type="domain" description="SSD" evidence="6">
    <location>
        <begin position="632"/>
        <end position="797"/>
    </location>
</feature>
<feature type="glycosylation site" description="N-linked (GlcNAc...) asparagine" evidence="14">
    <location>
        <position position="54"/>
    </location>
</feature>
<feature type="glycosylation site" description="N-linked (GlcNAc...) asparagine" evidence="5">
    <location>
        <position position="132"/>
    </location>
</feature>
<feature type="glycosylation site" description="N-linked (GlcNAc...) asparagine" evidence="14">
    <location>
        <position position="138"/>
    </location>
</feature>
<feature type="glycosylation site" description="N-linked (GlcNAc...) asparagine" evidence="5">
    <location>
        <position position="244"/>
    </location>
</feature>
<feature type="glycosylation site" description="N-linked (GlcNAc...) asparagine" evidence="5">
    <location>
        <position position="416"/>
    </location>
</feature>
<feature type="glycosylation site" description="N-linked (GlcNAc...) asparagine" evidence="5">
    <location>
        <position position="431"/>
    </location>
</feature>
<feature type="glycosylation site" description="N-linked (GlcNAc...) asparagine" evidence="5">
    <location>
        <position position="464"/>
    </location>
</feature>
<feature type="glycosylation site" description="N-linked (GlcNAc...) asparagine" evidence="5">
    <location>
        <position position="479"/>
    </location>
</feature>
<feature type="glycosylation site" description="N-linked (GlcNAc...) asparagine" evidence="5">
    <location>
        <position position="497"/>
    </location>
</feature>
<feature type="glycosylation site" description="N-linked (GlcNAc...) asparagine" evidence="5">
    <location>
        <position position="506"/>
    </location>
</feature>
<feature type="glycosylation site" description="N-linked (GlcNAc...) asparagine" evidence="5">
    <location>
        <position position="626"/>
    </location>
</feature>
<feature type="disulfide bond" evidence="14">
    <location>
        <begin position="33"/>
        <end position="90"/>
    </location>
</feature>
<feature type="disulfide bond" evidence="14">
    <location>
        <begin position="39"/>
        <end position="57"/>
    </location>
</feature>
<feature type="disulfide bond" evidence="14">
    <location>
        <begin position="78"/>
        <end position="125"/>
    </location>
</feature>
<feature type="disulfide bond" evidence="14">
    <location>
        <begin position="91"/>
        <end position="129"/>
    </location>
</feature>
<feature type="disulfide bond" evidence="14">
    <location>
        <begin position="113"/>
        <end position="254"/>
    </location>
</feature>
<feature type="disulfide bond" evidence="14">
    <location>
        <begin position="116"/>
        <end position="172"/>
    </location>
</feature>
<feature type="disulfide bond" evidence="14">
    <location>
        <begin position="189"/>
        <end position="197"/>
    </location>
</feature>
<feature type="disulfide bond" evidence="14">
    <location>
        <begin position="243"/>
        <end position="259"/>
    </location>
</feature>
<feature type="disulfide bond" evidence="14">
    <location>
        <begin position="256"/>
        <end position="263"/>
    </location>
</feature>
<feature type="disulfide bond" evidence="2">
    <location>
        <begin position="471"/>
        <end position="485"/>
    </location>
</feature>
<feature type="disulfide bond" evidence="2">
    <location>
        <begin position="525"/>
        <end position="542"/>
    </location>
</feature>
<feature type="disulfide bond" evidence="2">
    <location>
        <begin position="920"/>
        <end position="925"/>
    </location>
</feature>
<feature type="disulfide bond" evidence="2">
    <location>
        <begin position="966"/>
        <end position="1024"/>
    </location>
</feature>
<feature type="disulfide bond" evidence="2">
    <location>
        <begin position="980"/>
        <end position="989"/>
    </location>
</feature>
<feature type="splice variant" id="VSP_015312" description="In isoform 3." evidence="18">
    <original>RL</original>
    <variation>GP</variation>
    <location>
        <begin position="723"/>
        <end position="724"/>
    </location>
</feature>
<feature type="splice variant" id="VSP_015313" description="In isoform 3." evidence="18">
    <location>
        <begin position="725"/>
        <end position="1359"/>
    </location>
</feature>
<feature type="splice variant" id="VSP_054503" description="In isoform 4." evidence="20">
    <location>
        <begin position="850"/>
        <end position="895"/>
    </location>
</feature>
<feature type="splice variant" id="VSP_015314" description="In isoform 2 and isoform 4." evidence="18 19 20 22">
    <location>
        <begin position="1046"/>
        <end position="1072"/>
    </location>
</feature>
<feature type="sequence variant" id="VAR_023369" description="Found in a non-responder to ezetimibe treatment; dbSNP:rs119457968." evidence="11">
    <original>V</original>
    <variation>L</variation>
    <location>
        <position position="55"/>
    </location>
</feature>
<feature type="sequence variant" id="VAR_080844" evidence="16">
    <location>
        <begin position="167"/>
        <end position="1359"/>
    </location>
</feature>
<feature type="sequence variant" id="VAR_080845" description="Protective factor against coronary heart disease; correlated with low LDL-C content." evidence="16">
    <location>
        <begin position="406"/>
        <end position="1359"/>
    </location>
</feature>
<feature type="sequence variant" id="VAR_080846" evidence="16">
    <location>
        <begin position="483"/>
        <end position="1359"/>
    </location>
</feature>
<feature type="sequence variant" id="VAR_056659" description="In dbSNP:rs1468384.">
    <original>M</original>
    <variation>I</variation>
    <location>
        <position position="510"/>
    </location>
</feature>
<feature type="sequence variant" id="VAR_080847" evidence="16">
    <location>
        <begin position="592"/>
        <end position="1359"/>
    </location>
</feature>
<feature type="sequence variant" id="VAR_080848" evidence="16">
    <location>
        <begin position="601"/>
        <end position="1359"/>
    </location>
</feature>
<feature type="sequence variant" id="VAR_080849" evidence="16">
    <location>
        <begin position="604"/>
        <end position="1359"/>
    </location>
</feature>
<feature type="sequence variant" id="VAR_080850" evidence="16">
    <location>
        <begin position="738"/>
        <end position="1359"/>
    </location>
</feature>
<feature type="sequence variant" id="VAR_080851" evidence="16">
    <location>
        <begin position="803"/>
        <end position="1359"/>
    </location>
</feature>
<feature type="sequence variant" id="VAR_080852" evidence="16">
    <location>
        <begin position="967"/>
        <end position="1359"/>
    </location>
</feature>
<feature type="sequence variant" id="VAR_023370" description="Found in a non-responder to ezetimibe treatment; dbSNP:rs52815063." evidence="11">
    <original>I</original>
    <variation>N</variation>
    <location>
        <position position="1233"/>
    </location>
</feature>
<feature type="sequence variant" id="VAR_056660" description="In dbSNP:rs217435.">
    <original>E</original>
    <variation>K</variation>
    <location>
        <position position="1308"/>
    </location>
</feature>
<feature type="sequence variant" id="VAR_080853" evidence="16">
    <location>
        <begin position="1325"/>
        <end position="1359"/>
    </location>
</feature>
<feature type="mutagenesis site" description="Does not affect interaction with LIMA1." evidence="17">
    <original>LALE</original>
    <variation>AAAA</variation>
    <location>
        <begin position="1300"/>
        <end position="1303"/>
    </location>
</feature>
<feature type="mutagenesis site" description="Abolishes interaction with LIMA1." evidence="17">
    <original>QKR</original>
    <variation>AAA</variation>
    <location>
        <begin position="1304"/>
        <end position="1306"/>
    </location>
</feature>
<feature type="mutagenesis site" description="Does not affect interaction with LIMA1." evidence="17">
    <original>EE</original>
    <variation>AA</variation>
    <location>
        <begin position="1308"/>
        <end position="1309"/>
    </location>
</feature>
<feature type="sequence conflict" description="In Ref. 1; AAF20396 and 7; AAI43757." evidence="23" ref="1 7">
    <original>T</original>
    <variation>A</variation>
    <location>
        <position position="1073"/>
    </location>
</feature>
<feature type="strand" evidence="27">
    <location>
        <begin position="34"/>
        <end position="40"/>
    </location>
</feature>
<feature type="strand" evidence="27">
    <location>
        <begin position="47"/>
        <end position="49"/>
    </location>
</feature>
<feature type="strand" evidence="27">
    <location>
        <begin position="55"/>
        <end position="58"/>
    </location>
</feature>
<feature type="helix" evidence="27">
    <location>
        <begin position="68"/>
        <end position="77"/>
    </location>
</feature>
<feature type="helix" evidence="27">
    <location>
        <begin position="79"/>
        <end position="81"/>
    </location>
</feature>
<feature type="strand" evidence="27">
    <location>
        <begin position="84"/>
        <end position="86"/>
    </location>
</feature>
<feature type="strand" evidence="27">
    <location>
        <begin position="88"/>
        <end position="90"/>
    </location>
</feature>
<feature type="helix" evidence="27">
    <location>
        <begin position="93"/>
        <end position="109"/>
    </location>
</feature>
<feature type="turn" evidence="27">
    <location>
        <begin position="110"/>
        <end position="112"/>
    </location>
</feature>
<feature type="helix" evidence="27">
    <location>
        <begin position="114"/>
        <end position="129"/>
    </location>
</feature>
<feature type="helix" evidence="27">
    <location>
        <begin position="133"/>
        <end position="135"/>
    </location>
</feature>
<feature type="strand" evidence="27">
    <location>
        <begin position="137"/>
        <end position="143"/>
    </location>
</feature>
<feature type="strand" evidence="27">
    <location>
        <begin position="146"/>
        <end position="149"/>
    </location>
</feature>
<feature type="strand" evidence="27">
    <location>
        <begin position="152"/>
        <end position="161"/>
    </location>
</feature>
<feature type="helix" evidence="27">
    <location>
        <begin position="162"/>
        <end position="172"/>
    </location>
</feature>
<feature type="helix" evidence="27">
    <location>
        <begin position="186"/>
        <end position="188"/>
    </location>
</feature>
<feature type="strand" evidence="27">
    <location>
        <begin position="194"/>
        <end position="196"/>
    </location>
</feature>
<feature type="helix" evidence="27">
    <location>
        <begin position="199"/>
        <end position="206"/>
    </location>
</feature>
<feature type="turn" evidence="27">
    <location>
        <begin position="209"/>
        <end position="212"/>
    </location>
</feature>
<feature type="strand" evidence="27">
    <location>
        <begin position="215"/>
        <end position="223"/>
    </location>
</feature>
<feature type="helix" evidence="27">
    <location>
        <begin position="225"/>
        <end position="228"/>
    </location>
</feature>
<feature type="turn" evidence="27">
    <location>
        <begin position="248"/>
        <end position="250"/>
    </location>
</feature>
<feature type="turn" evidence="27">
    <location>
        <begin position="256"/>
        <end position="258"/>
    </location>
</feature>
<feature type="helix" evidence="27">
    <location>
        <begin position="260"/>
        <end position="262"/>
    </location>
</feature>
<feature type="helix" evidence="29">
    <location>
        <begin position="335"/>
        <end position="350"/>
    </location>
</feature>
<feature type="helix" evidence="29">
    <location>
        <begin position="352"/>
        <end position="367"/>
    </location>
</feature>
<feature type="strand" evidence="29">
    <location>
        <begin position="370"/>
        <end position="373"/>
    </location>
</feature>
<feature type="helix" evidence="29">
    <location>
        <begin position="380"/>
        <end position="382"/>
    </location>
</feature>
<feature type="helix" evidence="29">
    <location>
        <begin position="389"/>
        <end position="401"/>
    </location>
</feature>
<feature type="strand" evidence="29">
    <location>
        <begin position="406"/>
        <end position="411"/>
    </location>
</feature>
<feature type="strand" evidence="29">
    <location>
        <begin position="420"/>
        <end position="423"/>
    </location>
</feature>
<feature type="strand" evidence="29">
    <location>
        <begin position="425"/>
        <end position="427"/>
    </location>
</feature>
<feature type="strand" evidence="29">
    <location>
        <begin position="429"/>
        <end position="432"/>
    </location>
</feature>
<feature type="strand" evidence="29">
    <location>
        <begin position="434"/>
        <end position="437"/>
    </location>
</feature>
<feature type="helix" evidence="29">
    <location>
        <begin position="438"/>
        <end position="452"/>
    </location>
</feature>
<feature type="strand" evidence="28">
    <location>
        <begin position="455"/>
        <end position="458"/>
    </location>
</feature>
<feature type="turn" evidence="29">
    <location>
        <begin position="459"/>
        <end position="461"/>
    </location>
</feature>
<feature type="strand" evidence="28">
    <location>
        <begin position="463"/>
        <end position="466"/>
    </location>
</feature>
<feature type="helix" evidence="29">
    <location>
        <begin position="467"/>
        <end position="470"/>
    </location>
</feature>
<feature type="strand" evidence="31">
    <location>
        <begin position="474"/>
        <end position="476"/>
    </location>
</feature>
<feature type="strand" evidence="29">
    <location>
        <begin position="477"/>
        <end position="479"/>
    </location>
</feature>
<feature type="helix" evidence="31">
    <location>
        <begin position="482"/>
        <end position="484"/>
    </location>
</feature>
<feature type="strand" evidence="29">
    <location>
        <begin position="487"/>
        <end position="489"/>
    </location>
</feature>
<feature type="helix" evidence="29">
    <location>
        <begin position="490"/>
        <end position="494"/>
    </location>
</feature>
<feature type="helix" evidence="29">
    <location>
        <begin position="498"/>
        <end position="501"/>
    </location>
</feature>
<feature type="strand" evidence="29">
    <location>
        <begin position="505"/>
        <end position="511"/>
    </location>
</feature>
<feature type="strand" evidence="29">
    <location>
        <begin position="513"/>
        <end position="516"/>
    </location>
</feature>
<feature type="helix" evidence="29">
    <location>
        <begin position="518"/>
        <end position="527"/>
    </location>
</feature>
<feature type="strand" evidence="29">
    <location>
        <begin position="535"/>
        <end position="538"/>
    </location>
</feature>
<feature type="strand" evidence="30">
    <location>
        <begin position="545"/>
        <end position="548"/>
    </location>
</feature>
<feature type="helix" evidence="29">
    <location>
        <begin position="552"/>
        <end position="554"/>
    </location>
</feature>
<feature type="strand" evidence="29">
    <location>
        <begin position="556"/>
        <end position="558"/>
    </location>
</feature>
<feature type="strand" evidence="29">
    <location>
        <begin position="560"/>
        <end position="562"/>
    </location>
</feature>
<feature type="helix" evidence="29">
    <location>
        <begin position="564"/>
        <end position="566"/>
    </location>
</feature>
<feature type="strand" evidence="29">
    <location>
        <begin position="569"/>
        <end position="576"/>
    </location>
</feature>
<feature type="helix" evidence="29">
    <location>
        <begin position="585"/>
        <end position="606"/>
    </location>
</feature>
<feature type="turn" evidence="29">
    <location>
        <begin position="608"/>
        <end position="610"/>
    </location>
</feature>
<feature type="strand" evidence="29">
    <location>
        <begin position="614"/>
        <end position="616"/>
    </location>
</feature>
<feature type="helix" evidence="29">
    <location>
        <begin position="620"/>
        <end position="625"/>
    </location>
</feature>
<feature type="turn" evidence="29">
    <location>
        <begin position="630"/>
        <end position="632"/>
    </location>
</feature>
<feature type="helix" evidence="29">
    <location>
        <begin position="633"/>
        <end position="636"/>
    </location>
</feature>
<feature type="helix" evidence="29">
    <location>
        <begin position="638"/>
        <end position="646"/>
    </location>
</feature>
<feature type="turn" evidence="29">
    <location>
        <begin position="647"/>
        <end position="649"/>
    </location>
</feature>
<feature type="helix" evidence="29">
    <location>
        <begin position="657"/>
        <end position="659"/>
    </location>
</feature>
<feature type="turn" evidence="29">
    <location>
        <begin position="660"/>
        <end position="663"/>
    </location>
</feature>
<feature type="helix" evidence="29">
    <location>
        <begin position="666"/>
        <end position="689"/>
    </location>
</feature>
<feature type="helix" evidence="29">
    <location>
        <begin position="696"/>
        <end position="723"/>
    </location>
</feature>
<feature type="helix" evidence="29">
    <location>
        <begin position="732"/>
        <end position="761"/>
    </location>
</feature>
<feature type="helix" evidence="29">
    <location>
        <begin position="767"/>
        <end position="798"/>
    </location>
</feature>
<feature type="turn" evidence="29">
    <location>
        <begin position="802"/>
        <end position="805"/>
    </location>
</feature>
<feature type="strand" evidence="31">
    <location>
        <begin position="808"/>
        <end position="810"/>
    </location>
</feature>
<feature type="helix" evidence="29">
    <location>
        <begin position="828"/>
        <end position="832"/>
    </location>
</feature>
<feature type="helix" evidence="29">
    <location>
        <begin position="833"/>
        <end position="840"/>
    </location>
</feature>
<feature type="helix" evidence="29">
    <location>
        <begin position="843"/>
        <end position="863"/>
    </location>
</feature>
<feature type="helix" evidence="29">
    <location>
        <begin position="864"/>
        <end position="866"/>
    </location>
</feature>
<feature type="helix" evidence="29">
    <location>
        <begin position="873"/>
        <end position="876"/>
    </location>
</feature>
<feature type="strand" evidence="29">
    <location>
        <begin position="877"/>
        <end position="880"/>
    </location>
</feature>
<feature type="helix" evidence="29">
    <location>
        <begin position="883"/>
        <end position="893"/>
    </location>
</feature>
<feature type="strand" evidence="29">
    <location>
        <begin position="899"/>
        <end position="904"/>
    </location>
</feature>
<feature type="helix" evidence="29">
    <location>
        <begin position="913"/>
        <end position="917"/>
    </location>
</feature>
<feature type="strand" evidence="29">
    <location>
        <begin position="921"/>
        <end position="924"/>
    </location>
</feature>
<feature type="helix" evidence="29">
    <location>
        <begin position="930"/>
        <end position="938"/>
    </location>
</feature>
<feature type="turn" evidence="29">
    <location>
        <begin position="941"/>
        <end position="943"/>
    </location>
</feature>
<feature type="strand" evidence="29">
    <location>
        <begin position="946"/>
        <end position="951"/>
    </location>
</feature>
<feature type="helix" evidence="29">
    <location>
        <begin position="953"/>
        <end position="960"/>
    </location>
</feature>
<feature type="strand" evidence="29">
    <location>
        <begin position="961"/>
        <end position="978"/>
    </location>
</feature>
<feature type="strand" evidence="29">
    <location>
        <begin position="986"/>
        <end position="994"/>
    </location>
</feature>
<feature type="strand" evidence="31">
    <location>
        <begin position="998"/>
        <end position="1000"/>
    </location>
</feature>
<feature type="helix" evidence="29">
    <location>
        <begin position="1005"/>
        <end position="1017"/>
    </location>
</feature>
<feature type="turn" evidence="29">
    <location>
        <begin position="1029"/>
        <end position="1031"/>
    </location>
</feature>
<feature type="strand" evidence="29">
    <location>
        <begin position="1032"/>
        <end position="1038"/>
    </location>
</feature>
<feature type="strand" evidence="29">
    <location>
        <begin position="1040"/>
        <end position="1042"/>
    </location>
</feature>
<feature type="strand" evidence="29">
    <location>
        <begin position="1073"/>
        <end position="1080"/>
    </location>
</feature>
<feature type="helix" evidence="29">
    <location>
        <begin position="1086"/>
        <end position="1107"/>
    </location>
</feature>
<feature type="strand" evidence="29">
    <location>
        <begin position="1119"/>
        <end position="1122"/>
    </location>
</feature>
<feature type="helix" evidence="29">
    <location>
        <begin position="1126"/>
        <end position="1129"/>
    </location>
</feature>
<feature type="helix" evidence="29">
    <location>
        <begin position="1131"/>
        <end position="1133"/>
    </location>
</feature>
<feature type="helix" evidence="29">
    <location>
        <begin position="1135"/>
        <end position="1156"/>
    </location>
</feature>
<feature type="helix" evidence="29">
    <location>
        <begin position="1162"/>
        <end position="1185"/>
    </location>
</feature>
<feature type="helix" evidence="29">
    <location>
        <begin position="1192"/>
        <end position="1204"/>
    </location>
</feature>
<feature type="helix" evidence="29">
    <location>
        <begin position="1206"/>
        <end position="1217"/>
    </location>
</feature>
<feature type="helix" evidence="29">
    <location>
        <begin position="1224"/>
        <end position="1252"/>
    </location>
</feature>
<feature type="helix" evidence="29">
    <location>
        <begin position="1253"/>
        <end position="1256"/>
    </location>
</feature>
<feature type="helix" evidence="29">
    <location>
        <begin position="1260"/>
        <end position="1265"/>
    </location>
</feature>
<feature type="helix" evidence="29">
    <location>
        <begin position="1268"/>
        <end position="1282"/>
    </location>
</feature>
<feature type="helix" evidence="29">
    <location>
        <begin position="1285"/>
        <end position="1291"/>
    </location>
</feature>
<feature type="helix" evidence="30">
    <location>
        <begin position="1298"/>
        <end position="1300"/>
    </location>
</feature>
<feature type="helix" evidence="29">
    <location>
        <begin position="1301"/>
        <end position="1312"/>
    </location>
</feature>
<name>NPCL1_HUMAN</name>
<evidence type="ECO:0000250" key="1"/>
<evidence type="ECO:0000250" key="2">
    <source>
        <dbReference type="UniProtKB" id="O15118"/>
    </source>
</evidence>
<evidence type="ECO:0000250" key="3">
    <source>
        <dbReference type="UniProtKB" id="Q6T3U3"/>
    </source>
</evidence>
<evidence type="ECO:0000250" key="4">
    <source>
        <dbReference type="UniProtKB" id="Q6T3U4"/>
    </source>
</evidence>
<evidence type="ECO:0000255" key="5"/>
<evidence type="ECO:0000255" key="6">
    <source>
        <dbReference type="PROSITE-ProRule" id="PRU00199"/>
    </source>
</evidence>
<evidence type="ECO:0000269" key="7">
    <source>
    </source>
</evidence>
<evidence type="ECO:0000269" key="8">
    <source>
    </source>
</evidence>
<evidence type="ECO:0000269" key="9">
    <source>
    </source>
</evidence>
<evidence type="ECO:0000269" key="10">
    <source>
    </source>
</evidence>
<evidence type="ECO:0000269" key="11">
    <source>
    </source>
</evidence>
<evidence type="ECO:0000269" key="12">
    <source>
    </source>
</evidence>
<evidence type="ECO:0000269" key="13">
    <source>
    </source>
</evidence>
<evidence type="ECO:0000269" key="14">
    <source>
    </source>
</evidence>
<evidence type="ECO:0000269" key="15">
    <source>
    </source>
</evidence>
<evidence type="ECO:0000269" key="16">
    <source>
    </source>
</evidence>
<evidence type="ECO:0000269" key="17">
    <source>
    </source>
</evidence>
<evidence type="ECO:0000303" key="18">
    <source>
    </source>
</evidence>
<evidence type="ECO:0000303" key="19">
    <source>
    </source>
</evidence>
<evidence type="ECO:0000303" key="20">
    <source>
    </source>
</evidence>
<evidence type="ECO:0000303" key="21">
    <source>
    </source>
</evidence>
<evidence type="ECO:0000303" key="22">
    <source>
    </source>
</evidence>
<evidence type="ECO:0000305" key="23"/>
<evidence type="ECO:0000305" key="24">
    <source>
    </source>
</evidence>
<evidence type="ECO:0000305" key="25">
    <source>
    </source>
</evidence>
<evidence type="ECO:0000312" key="26">
    <source>
        <dbReference type="HGNC" id="HGNC:7898"/>
    </source>
</evidence>
<evidence type="ECO:0007829" key="27">
    <source>
        <dbReference type="PDB" id="3QNT"/>
    </source>
</evidence>
<evidence type="ECO:0007829" key="28">
    <source>
        <dbReference type="PDB" id="7DF8"/>
    </source>
</evidence>
<evidence type="ECO:0007829" key="29">
    <source>
        <dbReference type="PDB" id="7DFW"/>
    </source>
</evidence>
<evidence type="ECO:0007829" key="30">
    <source>
        <dbReference type="PDB" id="7N4U"/>
    </source>
</evidence>
<evidence type="ECO:0007829" key="31">
    <source>
        <dbReference type="PDB" id="7N4X"/>
    </source>
</evidence>
<accession>Q9UHC9</accession>
<accession>A4D2J7</accession>
<accession>B7ZLE6</accession>
<accession>D3DVK9</accession>
<accession>Q17RV5</accession>
<accession>Q6R3Q4</accession>
<accession>Q9UHC8</accession>
<comment type="function">
    <text evidence="3 4 12 15 24">Plays a major role in cholesterol homeostasis (PubMed:22095670). Critical for the uptake of cholesterol across the plasma membrane of the intestinal enterocyte (PubMed:22095670). Involved in plant sterol absorption, it transports sitosterol, although at lower rates than cholesterol (By similarity). Is the direct molecular target of ezetimibe, a drug that inhibits cholesterol absorption and is approved for the treatment of hypercholesterolemia (PubMed:15928087). May have a function in the transport of multiple lipids and their homeostasis, thereby influencing lipid metabolism regulation (PubMed:15671032). May be involved in caveolin trafficking from the plasma membrane (By similarity). In addition, acts as a negative regulator of NPC2 and down-regulates its expression and secretion by inhibiting its maturation and accelerating its degradation (PubMed:22095670).</text>
</comment>
<comment type="catalytic activity">
    <reaction evidence="24 25">
        <text>cholesterol(in) = cholesterol(out)</text>
        <dbReference type="Rhea" id="RHEA:39747"/>
        <dbReference type="ChEBI" id="CHEBI:16113"/>
    </reaction>
</comment>
<comment type="catalytic activity">
    <reaction evidence="3">
        <text>sitosterol(out) = sitosterol(in)</text>
        <dbReference type="Rhea" id="RHEA:70723"/>
        <dbReference type="ChEBI" id="CHEBI:27693"/>
    </reaction>
</comment>
<comment type="subunit">
    <text evidence="13 15 17">Interacts with RAB11A, MYO5B and RAB11FIP2. Interaction with RAB11A, MYO5B and RAB11FIP2 is required for proper transport to the plasma membrane upon cholesterol depletion. Interacts with NPC2. Interacts with LIMA1 (PubMed:29880681).</text>
</comment>
<comment type="subcellular location">
    <subcellularLocation>
        <location evidence="10">Apical cell membrane</location>
        <topology evidence="10">Multi-pass membrane protein</topology>
    </subcellularLocation>
    <subcellularLocation>
        <location evidence="3">Cell membrane</location>
        <topology evidence="1">Multi-pass membrane protein</topology>
    </subcellularLocation>
    <subcellularLocation>
        <location evidence="10">Cytoplasmic vesicle membrane</location>
        <topology evidence="10">Multi-pass membrane protein</topology>
    </subcellularLocation>
    <text evidence="1">Subfractionation of brush border membranes from proximal enterocytes suggests considerable association with the apical membrane fraction. Exists as a predominantly cell surface membrane expressed protein (By similarity). According to PubMed:15671032, localizes in a subcellular vesicular compartment rich in RAB5.</text>
</comment>
<comment type="alternative products">
    <event type="alternative splicing"/>
    <isoform>
        <id>Q9UHC9-1</id>
        <name>1</name>
        <sequence type="displayed"/>
    </isoform>
    <isoform>
        <id>Q9UHC9-2</id>
        <name>2</name>
        <name>NPC1L1DELTAE15</name>
        <sequence type="described" ref="VSP_015314"/>
    </isoform>
    <isoform>
        <id>Q9UHC9-3</id>
        <name>3</name>
        <name>NPCL1T</name>
        <sequence type="described" ref="VSP_015312 VSP_015313"/>
    </isoform>
    <isoform>
        <id>Q9UHC9-4</id>
        <name>4</name>
        <sequence type="described" ref="VSP_054503 VSP_015314"/>
    </isoform>
</comment>
<comment type="tissue specificity">
    <text evidence="7 8 10">Widely expressed. Expressed in liver. Also expressed in small intestine, pancreas, kidney, lung, pancreas, spleen, heart, gall bladder, brain, testis, stomach and muscle.</text>
</comment>
<comment type="induction">
    <text evidence="9">Expression is decreased in Caco-2 cells upon PPARD activation.</text>
</comment>
<comment type="PTM">
    <text evidence="1">Highly glycosylated.</text>
</comment>
<comment type="polymorphism">
    <text evidence="11 16">Genetic variations in NPC1L1 influence low density lipoprotein cholesterol (LDL-C) content defining the low density lipoprotein cholesterol level quantitative trait locus 7 (LDLCQ7) [MIM:617966]. Inactivating variants may confer a lower risk of coronary heart disease (PubMed:25390462). Rare NPC1L1 variants also influence response to ezetimibe, a drug that reduces plasma LDL-C by blocking sterol absorption in enterocytes (PubMed:15679830).</text>
</comment>
<comment type="miscellaneous">
    <text evidence="14">Target of cholesterol lowering drugs.</text>
</comment>
<comment type="similarity">
    <text evidence="23">Belongs to the patched family.</text>
</comment>
<dbReference type="EMBL" id="AF192522">
    <property type="protein sequence ID" value="AAF20396.1"/>
    <property type="molecule type" value="mRNA"/>
</dbReference>
<dbReference type="EMBL" id="AF192523">
    <property type="protein sequence ID" value="AAF20397.1"/>
    <property type="molecule type" value="mRNA"/>
</dbReference>
<dbReference type="EMBL" id="AY515256">
    <property type="protein sequence ID" value="AAS56939.1"/>
    <property type="molecule type" value="mRNA"/>
</dbReference>
<dbReference type="EMBL" id="AY437865">
    <property type="protein sequence ID" value="AAR97886.1"/>
    <property type="molecule type" value="mRNA"/>
</dbReference>
<dbReference type="EMBL" id="FJ481111">
    <property type="protein sequence ID" value="ACL18055.1"/>
    <property type="molecule type" value="mRNA"/>
</dbReference>
<dbReference type="EMBL" id="AC004938">
    <property type="status" value="NOT_ANNOTATED_CDS"/>
    <property type="molecule type" value="Genomic_DNA"/>
</dbReference>
<dbReference type="EMBL" id="CH236960">
    <property type="protein sequence ID" value="EAL23753.1"/>
    <property type="molecule type" value="Genomic_DNA"/>
</dbReference>
<dbReference type="EMBL" id="CH471128">
    <property type="protein sequence ID" value="EAW61096.1"/>
    <property type="molecule type" value="Genomic_DNA"/>
</dbReference>
<dbReference type="EMBL" id="CH471128">
    <property type="protein sequence ID" value="EAW61097.1"/>
    <property type="molecule type" value="Genomic_DNA"/>
</dbReference>
<dbReference type="EMBL" id="CH471128">
    <property type="protein sequence ID" value="EAW61098.1"/>
    <property type="molecule type" value="Genomic_DNA"/>
</dbReference>
<dbReference type="EMBL" id="BC117178">
    <property type="protein sequence ID" value="AAI17179.1"/>
    <property type="molecule type" value="mRNA"/>
</dbReference>
<dbReference type="EMBL" id="BC143756">
    <property type="protein sequence ID" value="AAI43757.1"/>
    <property type="molecule type" value="mRNA"/>
</dbReference>
<dbReference type="CCDS" id="CCDS43575.1">
    <molecule id="Q9UHC9-2"/>
</dbReference>
<dbReference type="CCDS" id="CCDS5491.1">
    <molecule id="Q9UHC9-1"/>
</dbReference>
<dbReference type="CCDS" id="CCDS75587.1">
    <molecule id="Q9UHC9-3"/>
</dbReference>
<dbReference type="RefSeq" id="NP_001095118.1">
    <property type="nucleotide sequence ID" value="NM_001101648.1"/>
</dbReference>
<dbReference type="RefSeq" id="NP_001287896.1">
    <molecule id="Q9UHC9-3"/>
    <property type="nucleotide sequence ID" value="NM_001300967.2"/>
</dbReference>
<dbReference type="RefSeq" id="NP_037521.2">
    <molecule id="Q9UHC9-1"/>
    <property type="nucleotide sequence ID" value="NM_013389.3"/>
</dbReference>
<dbReference type="PDB" id="3QNT">
    <property type="method" value="X-ray"/>
    <property type="resolution" value="2.83 A"/>
    <property type="chains" value="A=22-284"/>
</dbReference>
<dbReference type="PDB" id="7DF8">
    <property type="method" value="EM"/>
    <property type="resolution" value="3.03 A"/>
    <property type="chains" value="A=1-1301"/>
</dbReference>
<dbReference type="PDB" id="7DFW">
    <property type="method" value="EM"/>
    <property type="resolution" value="2.69 A"/>
    <property type="chains" value="A=1-1315"/>
</dbReference>
<dbReference type="PDB" id="7DFZ">
    <property type="method" value="EM"/>
    <property type="resolution" value="3.58 A"/>
    <property type="chains" value="A=1-1300"/>
</dbReference>
<dbReference type="PDB" id="7N4U">
    <property type="method" value="EM"/>
    <property type="resolution" value="3.34 A"/>
    <property type="chains" value="A/B=1-1359"/>
</dbReference>
<dbReference type="PDB" id="7N4V">
    <property type="method" value="EM"/>
    <property type="resolution" value="3.58 A"/>
    <property type="chains" value="A/B=1-1359"/>
</dbReference>
<dbReference type="PDB" id="7N4X">
    <property type="method" value="EM"/>
    <property type="resolution" value="3.33 A"/>
    <property type="chains" value="A=1-1359"/>
</dbReference>
<dbReference type="PDBsum" id="3QNT"/>
<dbReference type="PDBsum" id="7DF8"/>
<dbReference type="PDBsum" id="7DFW"/>
<dbReference type="PDBsum" id="7DFZ"/>
<dbReference type="PDBsum" id="7N4U"/>
<dbReference type="PDBsum" id="7N4V"/>
<dbReference type="PDBsum" id="7N4X"/>
<dbReference type="EMDB" id="EMD-24178"/>
<dbReference type="EMDB" id="EMD-24179"/>
<dbReference type="EMDB" id="EMD-24180"/>
<dbReference type="SMR" id="Q9UHC9"/>
<dbReference type="BioGRID" id="118936">
    <property type="interactions" value="3"/>
</dbReference>
<dbReference type="FunCoup" id="Q9UHC9">
    <property type="interactions" value="194"/>
</dbReference>
<dbReference type="IntAct" id="Q9UHC9">
    <property type="interactions" value="1"/>
</dbReference>
<dbReference type="STRING" id="9606.ENSP00000289547"/>
<dbReference type="BindingDB" id="Q9UHC9"/>
<dbReference type="ChEMBL" id="CHEMBL2027"/>
<dbReference type="DrugBank" id="DB00973">
    <property type="generic name" value="Ezetimibe"/>
</dbReference>
<dbReference type="DrugBank" id="DB11635">
    <property type="generic name" value="Tocofersolan"/>
</dbReference>
<dbReference type="DrugBank" id="DB00163">
    <property type="generic name" value="Vitamin E"/>
</dbReference>
<dbReference type="DrugCentral" id="Q9UHC9"/>
<dbReference type="GuidetoPHARMACOLOGY" id="2629"/>
<dbReference type="SwissLipids" id="SLP:000001532"/>
<dbReference type="TCDB" id="2.A.6.6.6">
    <property type="family name" value="the resistance-nodulation-cell division (rnd) superfamily"/>
</dbReference>
<dbReference type="GlyCosmos" id="Q9UHC9">
    <property type="glycosylation" value="11 sites, No reported glycans"/>
</dbReference>
<dbReference type="GlyGen" id="Q9UHC9">
    <property type="glycosylation" value="15 sites, 1 O-linked glycan (1 site)"/>
</dbReference>
<dbReference type="iPTMnet" id="Q9UHC9"/>
<dbReference type="PhosphoSitePlus" id="Q9UHC9"/>
<dbReference type="SwissPalm" id="Q9UHC9"/>
<dbReference type="BioMuta" id="NPC1L1"/>
<dbReference type="DMDM" id="425906049"/>
<dbReference type="jPOST" id="Q9UHC9"/>
<dbReference type="MassIVE" id="Q9UHC9"/>
<dbReference type="PaxDb" id="9606-ENSP00000289547"/>
<dbReference type="PeptideAtlas" id="Q9UHC9"/>
<dbReference type="ProteomicsDB" id="7220"/>
<dbReference type="ProteomicsDB" id="84317">
    <molecule id="Q9UHC9-1"/>
</dbReference>
<dbReference type="ProteomicsDB" id="84318">
    <molecule id="Q9UHC9-2"/>
</dbReference>
<dbReference type="ProteomicsDB" id="84319">
    <molecule id="Q9UHC9-3"/>
</dbReference>
<dbReference type="Pumba" id="Q9UHC9"/>
<dbReference type="Antibodypedia" id="13403">
    <property type="antibodies" value="201 antibodies from 25 providers"/>
</dbReference>
<dbReference type="DNASU" id="29881"/>
<dbReference type="Ensembl" id="ENST00000289547.8">
    <molecule id="Q9UHC9-1"/>
    <property type="protein sequence ID" value="ENSP00000289547.4"/>
    <property type="gene ID" value="ENSG00000015520.15"/>
</dbReference>
<dbReference type="Ensembl" id="ENST00000423141.1">
    <molecule id="Q9UHC9-3"/>
    <property type="protein sequence ID" value="ENSP00000404670.1"/>
    <property type="gene ID" value="ENSG00000015520.15"/>
</dbReference>
<dbReference type="GeneID" id="29881"/>
<dbReference type="KEGG" id="hsa:29881"/>
<dbReference type="UCSC" id="uc003tlb.4">
    <molecule id="Q9UHC9-1"/>
    <property type="organism name" value="human"/>
</dbReference>
<dbReference type="AGR" id="HGNC:7898"/>
<dbReference type="CTD" id="29881"/>
<dbReference type="DisGeNET" id="29881"/>
<dbReference type="GeneCards" id="NPC1L1"/>
<dbReference type="HGNC" id="HGNC:7898">
    <property type="gene designation" value="NPC1L1"/>
</dbReference>
<dbReference type="HPA" id="ENSG00000015520">
    <property type="expression patterns" value="Group enriched (intestine, liver)"/>
</dbReference>
<dbReference type="MalaCards" id="NPC1L1"/>
<dbReference type="MIM" id="608010">
    <property type="type" value="gene"/>
</dbReference>
<dbReference type="MIM" id="617966">
    <property type="type" value="phenotype"/>
</dbReference>
<dbReference type="neXtProt" id="NX_Q9UHC9"/>
<dbReference type="OpenTargets" id="ENSG00000015520"/>
<dbReference type="PharmGKB" id="PA31699"/>
<dbReference type="VEuPathDB" id="HostDB:ENSG00000015520"/>
<dbReference type="eggNOG" id="KOG1933">
    <property type="taxonomic scope" value="Eukaryota"/>
</dbReference>
<dbReference type="GeneTree" id="ENSGT00940000159904"/>
<dbReference type="HOGENOM" id="CLU_002359_6_0_1"/>
<dbReference type="InParanoid" id="Q9UHC9"/>
<dbReference type="OrthoDB" id="6510177at2759"/>
<dbReference type="PAN-GO" id="Q9UHC9">
    <property type="GO annotations" value="4 GO annotations based on evolutionary models"/>
</dbReference>
<dbReference type="PhylomeDB" id="Q9UHC9"/>
<dbReference type="TreeFam" id="TF300416"/>
<dbReference type="PathwayCommons" id="Q9UHC9"/>
<dbReference type="Reactome" id="R-HSA-8963678">
    <molecule id="Q9UHC9-2"/>
    <property type="pathway name" value="Intestinal lipid absorption"/>
</dbReference>
<dbReference type="SignaLink" id="Q9UHC9"/>
<dbReference type="SIGNOR" id="Q9UHC9"/>
<dbReference type="BioGRID-ORCS" id="29881">
    <property type="hits" value="21 hits in 1156 CRISPR screens"/>
</dbReference>
<dbReference type="ChiTaRS" id="NPC1L1">
    <property type="organism name" value="human"/>
</dbReference>
<dbReference type="EvolutionaryTrace" id="Q9UHC9"/>
<dbReference type="GenomeRNAi" id="29881"/>
<dbReference type="Pharos" id="Q9UHC9">
    <property type="development level" value="Tclin"/>
</dbReference>
<dbReference type="PRO" id="PR:Q9UHC9"/>
<dbReference type="Proteomes" id="UP000005640">
    <property type="component" value="Chromosome 7"/>
</dbReference>
<dbReference type="RNAct" id="Q9UHC9">
    <property type="molecule type" value="protein"/>
</dbReference>
<dbReference type="Bgee" id="ENSG00000015520">
    <property type="expression patterns" value="Expressed in jejunal mucosa and 101 other cell types or tissues"/>
</dbReference>
<dbReference type="ExpressionAtlas" id="Q9UHC9">
    <property type="expression patterns" value="baseline and differential"/>
</dbReference>
<dbReference type="GO" id="GO:0016324">
    <property type="term" value="C:apical plasma membrane"/>
    <property type="evidence" value="ECO:0007669"/>
    <property type="project" value="UniProtKB-SubCell"/>
</dbReference>
<dbReference type="GO" id="GO:0030659">
    <property type="term" value="C:cytoplasmic vesicle membrane"/>
    <property type="evidence" value="ECO:0007669"/>
    <property type="project" value="UniProtKB-SubCell"/>
</dbReference>
<dbReference type="GO" id="GO:0005886">
    <property type="term" value="C:plasma membrane"/>
    <property type="evidence" value="ECO:0000314"/>
    <property type="project" value="UniProtKB"/>
</dbReference>
<dbReference type="GO" id="GO:0015485">
    <property type="term" value="F:cholesterol binding"/>
    <property type="evidence" value="ECO:0000314"/>
    <property type="project" value="UniProtKB"/>
</dbReference>
<dbReference type="GO" id="GO:0031489">
    <property type="term" value="F:myosin V binding"/>
    <property type="evidence" value="ECO:0000353"/>
    <property type="project" value="UniProtKB"/>
</dbReference>
<dbReference type="GO" id="GO:0042803">
    <property type="term" value="F:protein homodimerization activity"/>
    <property type="evidence" value="ECO:0000314"/>
    <property type="project" value="UniProtKB"/>
</dbReference>
<dbReference type="GO" id="GO:0031267">
    <property type="term" value="F:small GTPase binding"/>
    <property type="evidence" value="ECO:0000353"/>
    <property type="project" value="UniProtKB"/>
</dbReference>
<dbReference type="GO" id="GO:0008431">
    <property type="term" value="F:vitamin E binding"/>
    <property type="evidence" value="ECO:0000314"/>
    <property type="project" value="UniProtKB"/>
</dbReference>
<dbReference type="GO" id="GO:0071501">
    <property type="term" value="P:cellular response to sterol depletion"/>
    <property type="evidence" value="ECO:0000314"/>
    <property type="project" value="UniProtKB"/>
</dbReference>
<dbReference type="GO" id="GO:0006695">
    <property type="term" value="P:cholesterol biosynthetic process"/>
    <property type="evidence" value="ECO:0000315"/>
    <property type="project" value="HGNC-UCL"/>
</dbReference>
<dbReference type="GO" id="GO:0042632">
    <property type="term" value="P:cholesterol homeostasis"/>
    <property type="evidence" value="ECO:0000318"/>
    <property type="project" value="GO_Central"/>
</dbReference>
<dbReference type="GO" id="GO:0030301">
    <property type="term" value="P:cholesterol transport"/>
    <property type="evidence" value="ECO:0000315"/>
    <property type="project" value="UniProtKB"/>
</dbReference>
<dbReference type="GO" id="GO:0030299">
    <property type="term" value="P:intestinal cholesterol absorption"/>
    <property type="evidence" value="ECO:0000315"/>
    <property type="project" value="HGNC-UCL"/>
</dbReference>
<dbReference type="GO" id="GO:0042157">
    <property type="term" value="P:lipoprotein metabolic process"/>
    <property type="evidence" value="ECO:0000315"/>
    <property type="project" value="HGNC-UCL"/>
</dbReference>
<dbReference type="GO" id="GO:0015918">
    <property type="term" value="P:sterol transport"/>
    <property type="evidence" value="ECO:0000318"/>
    <property type="project" value="GO_Central"/>
</dbReference>
<dbReference type="GO" id="GO:0042360">
    <property type="term" value="P:vitamin E metabolic process"/>
    <property type="evidence" value="ECO:0000314"/>
    <property type="project" value="UniProtKB"/>
</dbReference>
<dbReference type="GO" id="GO:0051180">
    <property type="term" value="P:vitamin transport"/>
    <property type="evidence" value="ECO:0000314"/>
    <property type="project" value="UniProtKB"/>
</dbReference>
<dbReference type="FunFam" id="1.20.1640.10:FF:000008">
    <property type="entry name" value="NPC intracellular cholesterol transporter 1"/>
    <property type="match status" value="1"/>
</dbReference>
<dbReference type="FunFam" id="1.20.1640.10:FF:000010">
    <property type="entry name" value="NPC intracellular cholesterol transporter 1"/>
    <property type="match status" value="1"/>
</dbReference>
<dbReference type="Gene3D" id="1.20.1640.10">
    <property type="entry name" value="Multidrug efflux transporter AcrB transmembrane domain"/>
    <property type="match status" value="2"/>
</dbReference>
<dbReference type="InterPro" id="IPR053958">
    <property type="entry name" value="HMGCR/SNAP/NPC1-like_SSD"/>
</dbReference>
<dbReference type="InterPro" id="IPR053956">
    <property type="entry name" value="NPC1_MLD"/>
</dbReference>
<dbReference type="InterPro" id="IPR032190">
    <property type="entry name" value="NPC1_N"/>
</dbReference>
<dbReference type="InterPro" id="IPR000731">
    <property type="entry name" value="SSD"/>
</dbReference>
<dbReference type="PANTHER" id="PTHR45727">
    <property type="entry name" value="NPC INTRACELLULAR CHOLESTEROL TRANSPORTER 1"/>
    <property type="match status" value="1"/>
</dbReference>
<dbReference type="PANTHER" id="PTHR45727:SF3">
    <property type="entry name" value="NPC1-LIKE INTRACELLULAR CHOLESTEROL TRANSPORTER 1"/>
    <property type="match status" value="1"/>
</dbReference>
<dbReference type="Pfam" id="PF22314">
    <property type="entry name" value="NPC1_MLD"/>
    <property type="match status" value="1"/>
</dbReference>
<dbReference type="Pfam" id="PF16414">
    <property type="entry name" value="NPC1_N"/>
    <property type="match status" value="1"/>
</dbReference>
<dbReference type="Pfam" id="PF12349">
    <property type="entry name" value="Sterol-sensing"/>
    <property type="match status" value="1"/>
</dbReference>
<dbReference type="SUPFAM" id="SSF82866">
    <property type="entry name" value="Multidrug efflux transporter AcrB transmembrane domain"/>
    <property type="match status" value="2"/>
</dbReference>
<dbReference type="PROSITE" id="PS50156">
    <property type="entry name" value="SSD"/>
    <property type="match status" value="1"/>
</dbReference>
<sequence length="1359" mass="148728">MAEAGLRGWLLWALLLRLAQSEPYTTIHQPGYCAFYDECGKNPELSGSLMTLSNVSCLSNTPARKITGDHLILLQKICPRLYTGPNTQACCSAKQLVSLEASLSITKALLTRCPACSDNFVNLHCHNTCSPNQSLFINVTRVAQLGAGQLPAVVAYEAFYQHSFAEQSYDSCSRVRVPAAATLAVGTMCGVYGSALCNAQRWLNFQGDTGNGLAPLDITFHLLEPGQAVGSGIQPLNEGVARCNESQGDDVATCSCQDCAASCPAIARPQALDSTFYLGQMPGSLVLIIILCSVFAVVTILLVGFRVAPARDKSKMVDPKKGTSLSDKLSFSTHTLLGQFFQGWGTWVASWPLTILVLSVIPVVALAAGLVFTELTTDPVELWSAPNSQARSEKAFHDQHFGPFFRTNQVILTAPNRSSYRYDSLLLGPKNFSGILDLDLLLELLELQERLRHLQVWSPEAQRNISLQDICYAPLNPDNTSLYDCCINSLLQYFQNNRTLLLLTANQTLMGQTSQVDWKDHFLYCANAPLTFKDGTALALSCMADYGAPVFPFLAIGGYKGKDYSEAEALIMTFSLNNYPAGDPRLAQAKLWEEAFLEEMRAFQRRMAGMFQVTFMAERSLEDEINRTTAEDLPIFATSYIVIFLYISLALGSYSSWSRVMVDSKATLGLGGVAVVLGAVMAAMGFFSYLGIRSSLVILQVVPFLVLSVGADNIFIFVLEYQRLPRRPGEPREVHIGRALGRVAPSMLLCSLSEAICFFLGALTPMPAVRTFALTSGLAVILDFLLQMSAFVALLSLDSKRQEASRLDVCCCVKPQELPPPGQGEGLLLGFFQKAYAPFLLHWITRGVVLLLFLALFGVSLYSMCHISVGLDQELALPKDSYLLDYFLFLNRYFEVGAPVYFVTTLGYNFSSEAGMNAICSSAGCNNFSFTQKIQYATEFPEQSYLAIPASSWVDDFIDWLTPSSCCRLYISGPNKDKFCPSTVNSLNCLKNCMSITMGSVRPSVEQFHKYLPWFLNDRPNIKCPKGGLAAYSTSVNLTSDGQVLDTVAILSPRLEYSGTISAHCNLYLLDSTSRFMAYHKPLKNSQDYTEALRAARELAANITADLRKVPGTDPAFEVFPYTITNVFYEQYLTILPEGLFMLSLCLVPTFAVSCLLLGLDLRSGLLNLLSIVMILVDTVGFMALWGISYNAVSLINLVSAVGMSVEFVSHITRSFAISTKPTWLERAKEATISMGSAVFAGVAMTNLPGILVLGLAKAQLIQIFFFRLNLLITLLGLLHGLVFLPVILSYVGPDVNPALALEQKRAEEAVAAVMVASCPNHPSRVSTADNIYVNHSFEGSIKGAGAISNFLPNNGRQF</sequence>
<keyword id="KW-0002">3D-structure</keyword>
<keyword id="KW-0025">Alternative splicing</keyword>
<keyword id="KW-1003">Cell membrane</keyword>
<keyword id="KW-0153">Cholesterol metabolism</keyword>
<keyword id="KW-0968">Cytoplasmic vesicle</keyword>
<keyword id="KW-1015">Disulfide bond</keyword>
<keyword id="KW-0325">Glycoprotein</keyword>
<keyword id="KW-0443">Lipid metabolism</keyword>
<keyword id="KW-0472">Membrane</keyword>
<keyword id="KW-1267">Proteomics identification</keyword>
<keyword id="KW-1185">Reference proteome</keyword>
<keyword id="KW-0732">Signal</keyword>
<keyword id="KW-0753">Steroid metabolism</keyword>
<keyword id="KW-1207">Sterol metabolism</keyword>
<keyword id="KW-0812">Transmembrane</keyword>
<keyword id="KW-1133">Transmembrane helix</keyword>
<keyword id="KW-0813">Transport</keyword>
<reference key="1">
    <citation type="journal article" date="2000" name="Genomics">
        <title>Evidence for a Niemann-Pick C (NPC) gene family: identification and characterization of NPC1L1.</title>
        <authorList>
            <person name="Davies J.P."/>
            <person name="Levy B."/>
            <person name="Ioannou Y.A."/>
        </authorList>
    </citation>
    <scope>NUCLEOTIDE SEQUENCE [MRNA] (ISOFORMS 1; 2 AND 3)</scope>
    <scope>TISSUE SPECIFICITY</scope>
</reference>
<reference key="2">
    <citation type="journal article" date="2004" name="Science">
        <title>Niemann-Pick C1 like 1 protein is critical for intestinal cholesterol absorption.</title>
        <authorList>
            <person name="Altmann S.W."/>
            <person name="Davis H.R. Jr."/>
            <person name="Zhu L.-J."/>
            <person name="Yao X."/>
            <person name="Hoos L.M."/>
            <person name="Tetzloff G."/>
            <person name="Iyer S.P.N."/>
            <person name="Maguire M."/>
            <person name="Golovko A."/>
            <person name="Zeng M."/>
            <person name="Wang L."/>
            <person name="Murgolo N."/>
            <person name="Graziano M.P."/>
        </authorList>
    </citation>
    <scope>NUCLEOTIDE SEQUENCE [MRNA] (ISOFORM 2)</scope>
    <scope>TISSUE SPECIFICITY</scope>
</reference>
<reference key="3">
    <citation type="journal article" date="2009" name="J. Lipid Res.">
        <title>Membrane topology of human NPC1L1, a key protein in enterohepatic cholesterol absorption.</title>
        <authorList>
            <person name="Wang J."/>
            <person name="Chu B.-B."/>
            <person name="Ge L."/>
            <person name="Li B.-L."/>
            <person name="Yan Y."/>
            <person name="Song B.L."/>
        </authorList>
    </citation>
    <scope>NUCLEOTIDE SEQUENCE [MRNA] (ISOFORM 2)</scope>
    <scope>TOPOLOGY</scope>
</reference>
<reference key="4">
    <citation type="journal article" date="2003" name="Nature">
        <title>The DNA sequence of human chromosome 7.</title>
        <authorList>
            <person name="Hillier L.W."/>
            <person name="Fulton R.S."/>
            <person name="Fulton L.A."/>
            <person name="Graves T.A."/>
            <person name="Pepin K.H."/>
            <person name="Wagner-McPherson C."/>
            <person name="Layman D."/>
            <person name="Maas J."/>
            <person name="Jaeger S."/>
            <person name="Walker R."/>
            <person name="Wylie K."/>
            <person name="Sekhon M."/>
            <person name="Becker M.C."/>
            <person name="O'Laughlin M.D."/>
            <person name="Schaller M.E."/>
            <person name="Fewell G.A."/>
            <person name="Delehaunty K.D."/>
            <person name="Miner T.L."/>
            <person name="Nash W.E."/>
            <person name="Cordes M."/>
            <person name="Du H."/>
            <person name="Sun H."/>
            <person name="Edwards J."/>
            <person name="Bradshaw-Cordum H."/>
            <person name="Ali J."/>
            <person name="Andrews S."/>
            <person name="Isak A."/>
            <person name="Vanbrunt A."/>
            <person name="Nguyen C."/>
            <person name="Du F."/>
            <person name="Lamar B."/>
            <person name="Courtney L."/>
            <person name="Kalicki J."/>
            <person name="Ozersky P."/>
            <person name="Bielicki L."/>
            <person name="Scott K."/>
            <person name="Holmes A."/>
            <person name="Harkins R."/>
            <person name="Harris A."/>
            <person name="Strong C.M."/>
            <person name="Hou S."/>
            <person name="Tomlinson C."/>
            <person name="Dauphin-Kohlberg S."/>
            <person name="Kozlowicz-Reilly A."/>
            <person name="Leonard S."/>
            <person name="Rohlfing T."/>
            <person name="Rock S.M."/>
            <person name="Tin-Wollam A.-M."/>
            <person name="Abbott A."/>
            <person name="Minx P."/>
            <person name="Maupin R."/>
            <person name="Strowmatt C."/>
            <person name="Latreille P."/>
            <person name="Miller N."/>
            <person name="Johnson D."/>
            <person name="Murray J."/>
            <person name="Woessner J.P."/>
            <person name="Wendl M.C."/>
            <person name="Yang S.-P."/>
            <person name="Schultz B.R."/>
            <person name="Wallis J.W."/>
            <person name="Spieth J."/>
            <person name="Bieri T.A."/>
            <person name="Nelson J.O."/>
            <person name="Berkowicz N."/>
            <person name="Wohldmann P.E."/>
            <person name="Cook L.L."/>
            <person name="Hickenbotham M.T."/>
            <person name="Eldred J."/>
            <person name="Williams D."/>
            <person name="Bedell J.A."/>
            <person name="Mardis E.R."/>
            <person name="Clifton S.W."/>
            <person name="Chissoe S.L."/>
            <person name="Marra M.A."/>
            <person name="Raymond C."/>
            <person name="Haugen E."/>
            <person name="Gillett W."/>
            <person name="Zhou Y."/>
            <person name="James R."/>
            <person name="Phelps K."/>
            <person name="Iadanoto S."/>
            <person name="Bubb K."/>
            <person name="Simms E."/>
            <person name="Levy R."/>
            <person name="Clendenning J."/>
            <person name="Kaul R."/>
            <person name="Kent W.J."/>
            <person name="Furey T.S."/>
            <person name="Baertsch R.A."/>
            <person name="Brent M.R."/>
            <person name="Keibler E."/>
            <person name="Flicek P."/>
            <person name="Bork P."/>
            <person name="Suyama M."/>
            <person name="Bailey J.A."/>
            <person name="Portnoy M.E."/>
            <person name="Torrents D."/>
            <person name="Chinwalla A.T."/>
            <person name="Gish W.R."/>
            <person name="Eddy S.R."/>
            <person name="McPherson J.D."/>
            <person name="Olson M.V."/>
            <person name="Eichler E.E."/>
            <person name="Green E.D."/>
            <person name="Waterston R.H."/>
            <person name="Wilson R.K."/>
        </authorList>
    </citation>
    <scope>NUCLEOTIDE SEQUENCE [LARGE SCALE GENOMIC DNA]</scope>
</reference>
<reference key="5">
    <citation type="journal article" date="2003" name="Science">
        <title>Human chromosome 7: DNA sequence and biology.</title>
        <authorList>
            <person name="Scherer S.W."/>
            <person name="Cheung J."/>
            <person name="MacDonald J.R."/>
            <person name="Osborne L.R."/>
            <person name="Nakabayashi K."/>
            <person name="Herbrick J.-A."/>
            <person name="Carson A.R."/>
            <person name="Parker-Katiraee L."/>
            <person name="Skaug J."/>
            <person name="Khaja R."/>
            <person name="Zhang J."/>
            <person name="Hudek A.K."/>
            <person name="Li M."/>
            <person name="Haddad M."/>
            <person name="Duggan G.E."/>
            <person name="Fernandez B.A."/>
            <person name="Kanematsu E."/>
            <person name="Gentles S."/>
            <person name="Christopoulos C.C."/>
            <person name="Choufani S."/>
            <person name="Kwasnicka D."/>
            <person name="Zheng X.H."/>
            <person name="Lai Z."/>
            <person name="Nusskern D.R."/>
            <person name="Zhang Q."/>
            <person name="Gu Z."/>
            <person name="Lu F."/>
            <person name="Zeesman S."/>
            <person name="Nowaczyk M.J."/>
            <person name="Teshima I."/>
            <person name="Chitayat D."/>
            <person name="Shuman C."/>
            <person name="Weksberg R."/>
            <person name="Zackai E.H."/>
            <person name="Grebe T.A."/>
            <person name="Cox S.R."/>
            <person name="Kirkpatrick S.J."/>
            <person name="Rahman N."/>
            <person name="Friedman J.M."/>
            <person name="Heng H.H.Q."/>
            <person name="Pelicci P.G."/>
            <person name="Lo-Coco F."/>
            <person name="Belloni E."/>
            <person name="Shaffer L.G."/>
            <person name="Pober B."/>
            <person name="Morton C.C."/>
            <person name="Gusella J.F."/>
            <person name="Bruns G.A.P."/>
            <person name="Korf B.R."/>
            <person name="Quade B.J."/>
            <person name="Ligon A.H."/>
            <person name="Ferguson H."/>
            <person name="Higgins A.W."/>
            <person name="Leach N.T."/>
            <person name="Herrick S.R."/>
            <person name="Lemyre E."/>
            <person name="Farra C.G."/>
            <person name="Kim H.-G."/>
            <person name="Summers A.M."/>
            <person name="Gripp K.W."/>
            <person name="Roberts W."/>
            <person name="Szatmari P."/>
            <person name="Winsor E.J.T."/>
            <person name="Grzeschik K.-H."/>
            <person name="Teebi A."/>
            <person name="Minassian B.A."/>
            <person name="Kere J."/>
            <person name="Armengol L."/>
            <person name="Pujana M.A."/>
            <person name="Estivill X."/>
            <person name="Wilson M.D."/>
            <person name="Koop B.F."/>
            <person name="Tosi S."/>
            <person name="Moore G.E."/>
            <person name="Boright A.P."/>
            <person name="Zlotorynski E."/>
            <person name="Kerem B."/>
            <person name="Kroisel P.M."/>
            <person name="Petek E."/>
            <person name="Oscier D.G."/>
            <person name="Mould S.J."/>
            <person name="Doehner H."/>
            <person name="Doehner K."/>
            <person name="Rommens J.M."/>
            <person name="Vincent J.B."/>
            <person name="Venter J.C."/>
            <person name="Li P.W."/>
            <person name="Mural R.J."/>
            <person name="Adams M.D."/>
            <person name="Tsui L.-C."/>
        </authorList>
    </citation>
    <scope>NUCLEOTIDE SEQUENCE [LARGE SCALE GENOMIC DNA]</scope>
</reference>
<reference key="6">
    <citation type="submission" date="2005-09" db="EMBL/GenBank/DDBJ databases">
        <authorList>
            <person name="Mural R.J."/>
            <person name="Istrail S."/>
            <person name="Sutton G."/>
            <person name="Florea L."/>
            <person name="Halpern A.L."/>
            <person name="Mobarry C.M."/>
            <person name="Lippert R."/>
            <person name="Walenz B."/>
            <person name="Shatkay H."/>
            <person name="Dew I."/>
            <person name="Miller J.R."/>
            <person name="Flanigan M.J."/>
            <person name="Edwards N.J."/>
            <person name="Bolanos R."/>
            <person name="Fasulo D."/>
            <person name="Halldorsson B.V."/>
            <person name="Hannenhalli S."/>
            <person name="Turner R."/>
            <person name="Yooseph S."/>
            <person name="Lu F."/>
            <person name="Nusskern D.R."/>
            <person name="Shue B.C."/>
            <person name="Zheng X.H."/>
            <person name="Zhong F."/>
            <person name="Delcher A.L."/>
            <person name="Huson D.H."/>
            <person name="Kravitz S.A."/>
            <person name="Mouchard L."/>
            <person name="Reinert K."/>
            <person name="Remington K.A."/>
            <person name="Clark A.G."/>
            <person name="Waterman M.S."/>
            <person name="Eichler E.E."/>
            <person name="Adams M.D."/>
            <person name="Hunkapiller M.W."/>
            <person name="Myers E.W."/>
            <person name="Venter J.C."/>
        </authorList>
    </citation>
    <scope>NUCLEOTIDE SEQUENCE [LARGE SCALE GENOMIC DNA]</scope>
</reference>
<reference key="7">
    <citation type="journal article" date="2004" name="Genome Res.">
        <title>The status, quality, and expansion of the NIH full-length cDNA project: the Mammalian Gene Collection (MGC).</title>
        <authorList>
            <consortium name="The MGC Project Team"/>
        </authorList>
    </citation>
    <scope>NUCLEOTIDE SEQUENCE [LARGE SCALE MRNA] (ISOFORMS 2 AND 4)</scope>
    <source>
        <tissue>Liver</tissue>
    </source>
</reference>
<reference key="8">
    <citation type="journal article" date="2005" name="J. Biol. Chem.">
        <title>Inactivation of NPC1L1 causes multiple lipid transport defects and protects against diet-induced hypercholesterolemia.</title>
        <authorList>
            <person name="Davies J.P."/>
            <person name="Scott C."/>
            <person name="Oishi K."/>
            <person name="Liapis A."/>
            <person name="Ioannou Y.A."/>
        </authorList>
    </citation>
    <scope>TISSUE SPECIFICITY</scope>
    <scope>SUBCELLULAR LOCATION</scope>
    <scope>FUNCTION</scope>
    <scope>CATALYTIC ACTIVITY</scope>
</reference>
<reference key="9">
    <citation type="journal article" date="2005" name="J. Lipid Res.">
        <title>Reduced cholesterol absorption upon PPARdelta activation coincides with decreased intestinal expression of NPC1L1.</title>
        <authorList>
            <person name="van der Veen J.N."/>
            <person name="Kruit J.K."/>
            <person name="Havinga R."/>
            <person name="Baller J.F.W."/>
            <person name="Chimini G."/>
            <person name="Lestavel S."/>
            <person name="Staels B."/>
            <person name="Groot P.H.E."/>
            <person name="Groen A.K."/>
            <person name="Kuipers F."/>
        </authorList>
    </citation>
    <scope>INDUCTION</scope>
</reference>
<reference key="10">
    <citation type="journal article" date="2005" name="Proc. Natl. Acad. Sci. U.S.A.">
        <title>The target of ezetimibe is Niemann-Pick C1-like 1 (NPC1L1).</title>
        <authorList>
            <person name="Garcia-Calvo M."/>
            <person name="Lisnock J."/>
            <person name="Bull H.G."/>
            <person name="Hawes B.E."/>
            <person name="Burnett D.A."/>
            <person name="Braun M.P."/>
            <person name="Crona J.H."/>
            <person name="Davis H.R. Jr."/>
            <person name="Dean D.C."/>
            <person name="Detmers P.A."/>
            <person name="Graziano M.P."/>
            <person name="Hughes M."/>
            <person name="MacIntyre D.E."/>
            <person name="Ogawa A."/>
            <person name="O'neill K.A."/>
            <person name="Iyer S.P.N."/>
            <person name="Shevell D.E."/>
            <person name="Smith M.M."/>
            <person name="Tang Y.S."/>
            <person name="Makarewicz A.M."/>
            <person name="Ujjainwalla F."/>
            <person name="Altmann S.W."/>
            <person name="Chapman K.T."/>
            <person name="Thornberry N.A."/>
        </authorList>
    </citation>
    <scope>FUNCTION</scope>
</reference>
<reference key="11">
    <citation type="journal article" date="2009" name="J. Biol. Chem.">
        <title>Requirement of myosin Vb.Rab11a.Rab11-FIP2 complex in cholesterol-regulated translocation of NPC1L1 to the cell surface.</title>
        <authorList>
            <person name="Chu B.-B."/>
            <person name="Ge L."/>
            <person name="Xie C."/>
            <person name="Zhao Y."/>
            <person name="Miao H.-H."/>
            <person name="Wang J."/>
            <person name="Li B.-L."/>
            <person name="Song B.-L."/>
        </authorList>
    </citation>
    <scope>INTERACTION WITH RAB11A; MYO5B AND RAB11FIP2</scope>
</reference>
<reference key="12">
    <citation type="journal article" date="2012" name="Hepatology">
        <title>Novel function of Niemann-Pick C1-like 1 as a negative regulator of Niemann-Pick C2 protein.</title>
        <authorList>
            <person name="Yamanashi Y."/>
            <person name="Takada T."/>
            <person name="Shoda J."/>
            <person name="Suzuki H."/>
        </authorList>
    </citation>
    <scope>FUNCTION</scope>
    <scope>INTERACTION WITH NPC2</scope>
</reference>
<reference key="13">
    <citation type="journal article" date="2011" name="PLoS ONE">
        <title>The structure of the NPC1L1 N-terminal domain in a closed conformation.</title>
        <authorList>
            <person name="Kwon H.J."/>
            <person name="Palnitkar M."/>
            <person name="Deisenhofer J."/>
        </authorList>
    </citation>
    <scope>X-RAY CRYSTALLOGRAPHY (2.83 ANGSTROMS) OF 22-284</scope>
    <scope>DISULFIDE BONDS</scope>
    <scope>GLYCOSYLATION AT ASN-54 AND ASN-138</scope>
</reference>
<reference key="14">
    <citation type="journal article" date="2005" name="Clin. Genet.">
        <title>Compound heterozygosity for two non-synonymous polymorphisms in NPC1L1 in a non-responder to ezetimibe.</title>
        <authorList>
            <person name="Wang J."/>
            <person name="Williams C.M."/>
            <person name="Hegele R.A."/>
        </authorList>
    </citation>
    <scope>VARIANTS LEU-55 AND ASN-1233</scope>
    <scope>POLYMORPHISM</scope>
</reference>
<reference key="15">
    <citation type="journal article" date="2014" name="N. Engl. J. Med.">
        <title>Inactivating mutations in NPC1L1 and protection from coronary heart disease.</title>
        <authorList>
            <consortium name="Myocardial Infarction Genetics Consortium Investigators"/>
            <person name="Stitziel N.O."/>
            <person name="Won H.H."/>
            <person name="Morrison A.C."/>
            <person name="Peloso G.M."/>
            <person name="Do R."/>
            <person name="Lange L.A."/>
            <person name="Fontanillas P."/>
            <person name="Gupta N."/>
            <person name="Duga S."/>
            <person name="Goel A."/>
            <person name="Farrall M."/>
            <person name="Saleheen D."/>
            <person name="Ferrario P."/>
            <person name="Koenig I."/>
            <person name="Asselta R."/>
            <person name="Merlini P.A."/>
            <person name="Marziliano N."/>
            <person name="Notarangelo M.F."/>
            <person name="Schick U."/>
            <person name="Auer P."/>
            <person name="Assimes T.L."/>
            <person name="Reilly M."/>
            <person name="Wilensky R."/>
            <person name="Rader D.J."/>
            <person name="Hovingh G.K."/>
            <person name="Meitinger T."/>
            <person name="Kessler T."/>
            <person name="Kastrati A."/>
            <person name="Laugwitz K.L."/>
            <person name="Siscovick D."/>
            <person name="Rotter J.I."/>
            <person name="Hazen S.L."/>
            <person name="Tracy R."/>
            <person name="Cresci S."/>
            <person name="Spertus J."/>
            <person name="Jackson R."/>
            <person name="Schwartz S.M."/>
            <person name="Natarajan P."/>
            <person name="Crosby J."/>
            <person name="Muzny D."/>
            <person name="Ballantyne C."/>
            <person name="Rich S.S."/>
            <person name="O'Donnell C.J."/>
            <person name="Abecasis G."/>
            <person name="Sunaev S."/>
            <person name="Nickerson D.A."/>
            <person name="Buring J.E."/>
            <person name="Ridker P.M."/>
            <person name="Chasman D.I."/>
            <person name="Austin E."/>
            <person name="Kullo I.J."/>
            <person name="Weeke P.E."/>
            <person name="Shaffer C.M."/>
            <person name="Bastarache L.A."/>
            <person name="Denny J.C."/>
            <person name="Roden D.M."/>
            <person name="Palmer C."/>
            <person name="Deloukas P."/>
            <person name="Lin D.Y."/>
            <person name="Tang Z.Z."/>
            <person name="Erdmann J."/>
            <person name="Schunkert H."/>
            <person name="Danesh J."/>
            <person name="Marrugat J."/>
            <person name="Elosua R."/>
            <person name="Ardissino D."/>
            <person name="McPherson R."/>
            <person name="Watkins H."/>
            <person name="Reiner A.P."/>
            <person name="Wilson J.G."/>
            <person name="Altshuler D."/>
            <person name="Gibbs R.A."/>
            <person name="Lander E.S."/>
            <person name="Boerwinkle E."/>
            <person name="Gabriel S."/>
            <person name="Kathiresan S."/>
        </authorList>
    </citation>
    <scope>VARIANTS 167-GLN--PHE-1359 DEL; 406-ARG--PHE-1359 DEL; 483-TYR--PHE-1359 DEL; 592-TRP--PHE-1359 DEL; 601-ARG--PHE-1359 DEL; 604-GLN--PHE-1359 DEL; 738-ARG--PHE-1359 DEL; 803-GLU--PHE-1359 DEL; 967-CYS--PHE-1359 DEL AND 1325-ARG--PHE-1359 DEL</scope>
    <scope>POLYMORPHISM</scope>
    <scope>INVOLVEMENT IN LDLCQ7</scope>
</reference>
<reference key="16">
    <citation type="journal article" date="2018" name="Science">
        <title>A LIMA1 variant promotes low plasma LDL cholesterol and decreases intestinal cholesterol absorption.</title>
        <authorList>
            <person name="Zhang Y.Y."/>
            <person name="Fu Z.Y."/>
            <person name="Wei J."/>
            <person name="Qi W."/>
            <person name="Baituola G."/>
            <person name="Luo J."/>
            <person name="Meng Y.J."/>
            <person name="Guo S.Y."/>
            <person name="Yin H."/>
            <person name="Jiang S.Y."/>
            <person name="Li Y.F."/>
            <person name="Miao H.H."/>
            <person name="Liu Y."/>
            <person name="Wang Y."/>
            <person name="Li B.L."/>
            <person name="Ma Y.T."/>
            <person name="Song B.L."/>
        </authorList>
    </citation>
    <scope>INTERACTION WITH LIMA1</scope>
    <scope>MUTAGENESIS OF 1300-LEU--GLU-1303; 1304-GLN--ARG-1306 AND 1308-GLU-GLU-1309</scope>
</reference>
<gene>
    <name evidence="26" type="primary">NPC1L1</name>
</gene>
<protein>
    <recommendedName>
        <fullName evidence="26">NPC1-like intracellular cholesterol transporter 1</fullName>
        <shortName evidence="21">NPC1L1</shortName>
    </recommendedName>
    <alternativeName>
        <fullName evidence="18">Niemann-Pick C1-like protein 1</fullName>
    </alternativeName>
</protein>
<organism>
    <name type="scientific">Homo sapiens</name>
    <name type="common">Human</name>
    <dbReference type="NCBI Taxonomy" id="9606"/>
    <lineage>
        <taxon>Eukaryota</taxon>
        <taxon>Metazoa</taxon>
        <taxon>Chordata</taxon>
        <taxon>Craniata</taxon>
        <taxon>Vertebrata</taxon>
        <taxon>Euteleostomi</taxon>
        <taxon>Mammalia</taxon>
        <taxon>Eutheria</taxon>
        <taxon>Euarchontoglires</taxon>
        <taxon>Primates</taxon>
        <taxon>Haplorrhini</taxon>
        <taxon>Catarrhini</taxon>
        <taxon>Hominidae</taxon>
        <taxon>Homo</taxon>
    </lineage>
</organism>
<proteinExistence type="evidence at protein level"/>